<evidence type="ECO:0000250" key="1"/>
<evidence type="ECO:0000255" key="2">
    <source>
        <dbReference type="PROSITE-ProRule" id="PRU00560"/>
    </source>
</evidence>
<evidence type="ECO:0000255" key="3">
    <source>
        <dbReference type="PROSITE-ProRule" id="PRU00617"/>
    </source>
</evidence>
<evidence type="ECO:0000256" key="4">
    <source>
        <dbReference type="SAM" id="MobiDB-lite"/>
    </source>
</evidence>
<evidence type="ECO:0000305" key="5"/>
<sequence length="730" mass="84074">MNALLNHMNTEQSEAVKTTEGPLLIMAGAGSGKTRVLTHRIAYLLDEKDVSPYNVLAITFTNKAAREMKERVQKLVGDQAEVIWMSTFHSMCVRILRRDADRIGIERNFTIIDPTDQKSVIKDVLKNENIDSKKFEPRMFIGAISNLKNELKTPADAQKEATDYHSQMVATVYSGYQRQLSRNEALDFDDLIMTTINLFERVPEVLEYYQNKFQYIHVDEYQDTNKAQYTLVKLLASKFKNLCVVGDSDQSIYGWRGADIQNILSFEKDYPEANTIFLEQNYRSTKTILNAANEVIKNNSERKPKGLWTANTNGEKIHYYEAMTERDEAEFVIREIMKHQRNGKKYQDMAILYRTNAQSRVLEETFMKSNMPYTMVGGQKFYDRKEIKDLLSYLRIIANSNDDISLQRIINVPKRGVGPSSVEKVQNYALQNNISMFDALGEADFIGLSKKVTQECLNFYELIQSLIKEQEFLEIHEIVDEVLQKSGYREMLERENTLESRSRLENIDEFMSVPKDYEENTPLEEQSLINFLTDLSLVADIDEADTENGVTLMTMHSAKGLEFPIVFIMGMEESLFPHIRAIKSEDDHEMQEERRICYVAITRAEEVLYITHATSRMLFGRPQSNMPSRFLKEIPESLLENHSSGKRQTIQPKAKPFAKRGFSQRTTSTKKQVLSSDWNVGDKVMHKAWGEGMVSNVNEKNGSIELDIIFKSQGPKRLLAQFAPIEKKED</sequence>
<feature type="chain" id="PRO_0000102061" description="ATP-dependent DNA helicase PcrA">
    <location>
        <begin position="1"/>
        <end position="730"/>
    </location>
</feature>
<feature type="domain" description="UvrD-like helicase ATP-binding" evidence="2">
    <location>
        <begin position="6"/>
        <end position="285"/>
    </location>
</feature>
<feature type="domain" description="UvrD-like helicase C-terminal" evidence="3">
    <location>
        <begin position="286"/>
        <end position="560"/>
    </location>
</feature>
<feature type="region of interest" description="Disordered" evidence="4">
    <location>
        <begin position="641"/>
        <end position="668"/>
    </location>
</feature>
<feature type="compositionally biased region" description="Polar residues" evidence="4">
    <location>
        <begin position="641"/>
        <end position="651"/>
    </location>
</feature>
<feature type="binding site" evidence="2">
    <location>
        <begin position="30"/>
        <end position="35"/>
    </location>
    <ligand>
        <name>ATP</name>
        <dbReference type="ChEBI" id="CHEBI:30616"/>
    </ligand>
</feature>
<feature type="binding site" evidence="1">
    <location>
        <position position="283"/>
    </location>
    <ligand>
        <name>ATP</name>
        <dbReference type="ChEBI" id="CHEBI:30616"/>
    </ligand>
</feature>
<feature type="mutagenesis site" description="In pcrA3; affects plasmid pT181 replication.">
    <original>T</original>
    <variation>I</variation>
    <location>
        <position position="61"/>
    </location>
</feature>
<feature type="sequence conflict" description="In Ref. 1." evidence="5" ref="1">
    <location>
        <begin position="666"/>
        <end position="667"/>
    </location>
</feature>
<gene>
    <name type="primary">pcrA</name>
    <name type="ordered locus">SAOUHSC_02123</name>
</gene>
<proteinExistence type="evidence at protein level"/>
<dbReference type="EC" id="5.6.2.4"/>
<dbReference type="EMBL" id="M63176">
    <property type="protein sequence ID" value="AAA72091.1"/>
    <property type="status" value="ALT_FRAME"/>
    <property type="molecule type" value="Unassigned_DNA"/>
</dbReference>
<dbReference type="EMBL" id="CP000253">
    <property type="protein sequence ID" value="ABD31172.1"/>
    <property type="molecule type" value="Genomic_DNA"/>
</dbReference>
<dbReference type="PIR" id="S39923">
    <property type="entry name" value="S39923"/>
</dbReference>
<dbReference type="RefSeq" id="WP_000992921.1">
    <property type="nucleotide sequence ID" value="NZ_LS483365.1"/>
</dbReference>
<dbReference type="RefSeq" id="YP_500614.1">
    <property type="nucleotide sequence ID" value="NC_007795.1"/>
</dbReference>
<dbReference type="SMR" id="Q53727"/>
<dbReference type="STRING" id="93061.SAOUHSC_02123"/>
<dbReference type="PaxDb" id="1280-SAXN108_2005"/>
<dbReference type="GeneID" id="3921194"/>
<dbReference type="KEGG" id="sao:SAOUHSC_02123"/>
<dbReference type="PATRIC" id="fig|93061.5.peg.1926"/>
<dbReference type="eggNOG" id="COG0210">
    <property type="taxonomic scope" value="Bacteria"/>
</dbReference>
<dbReference type="HOGENOM" id="CLU_004585_5_2_9"/>
<dbReference type="OrthoDB" id="9810135at2"/>
<dbReference type="PRO" id="PR:Q53727"/>
<dbReference type="Proteomes" id="UP000008816">
    <property type="component" value="Chromosome"/>
</dbReference>
<dbReference type="GO" id="GO:0005829">
    <property type="term" value="C:cytosol"/>
    <property type="evidence" value="ECO:0000318"/>
    <property type="project" value="GO_Central"/>
</dbReference>
<dbReference type="GO" id="GO:0033202">
    <property type="term" value="C:DNA helicase complex"/>
    <property type="evidence" value="ECO:0000318"/>
    <property type="project" value="GO_Central"/>
</dbReference>
<dbReference type="GO" id="GO:0043138">
    <property type="term" value="F:3'-5' DNA helicase activity"/>
    <property type="evidence" value="ECO:0000318"/>
    <property type="project" value="GO_Central"/>
</dbReference>
<dbReference type="GO" id="GO:0005524">
    <property type="term" value="F:ATP binding"/>
    <property type="evidence" value="ECO:0007669"/>
    <property type="project" value="UniProtKB-KW"/>
</dbReference>
<dbReference type="GO" id="GO:0016887">
    <property type="term" value="F:ATP hydrolysis activity"/>
    <property type="evidence" value="ECO:0007669"/>
    <property type="project" value="RHEA"/>
</dbReference>
<dbReference type="GO" id="GO:0003677">
    <property type="term" value="F:DNA binding"/>
    <property type="evidence" value="ECO:0007669"/>
    <property type="project" value="UniProtKB-KW"/>
</dbReference>
<dbReference type="GO" id="GO:0006260">
    <property type="term" value="P:DNA replication"/>
    <property type="evidence" value="ECO:0007669"/>
    <property type="project" value="InterPro"/>
</dbReference>
<dbReference type="GO" id="GO:0000725">
    <property type="term" value="P:recombinational repair"/>
    <property type="evidence" value="ECO:0000318"/>
    <property type="project" value="GO_Central"/>
</dbReference>
<dbReference type="CDD" id="cd17932">
    <property type="entry name" value="DEXQc_UvrD"/>
    <property type="match status" value="1"/>
</dbReference>
<dbReference type="CDD" id="cd18807">
    <property type="entry name" value="SF1_C_UvrD"/>
    <property type="match status" value="1"/>
</dbReference>
<dbReference type="FunFam" id="1.10.10.160:FF:000001">
    <property type="entry name" value="ATP-dependent DNA helicase"/>
    <property type="match status" value="1"/>
</dbReference>
<dbReference type="FunFam" id="1.10.486.10:FF:000003">
    <property type="entry name" value="ATP-dependent DNA helicase"/>
    <property type="match status" value="1"/>
</dbReference>
<dbReference type="Gene3D" id="1.10.10.160">
    <property type="match status" value="1"/>
</dbReference>
<dbReference type="Gene3D" id="3.40.50.300">
    <property type="entry name" value="P-loop containing nucleotide triphosphate hydrolases"/>
    <property type="match status" value="2"/>
</dbReference>
<dbReference type="Gene3D" id="1.10.486.10">
    <property type="entry name" value="PCRA, domain 4"/>
    <property type="match status" value="1"/>
</dbReference>
<dbReference type="InterPro" id="IPR005751">
    <property type="entry name" value="ATP-dep_DNA_helicase_PcrA"/>
</dbReference>
<dbReference type="InterPro" id="IPR013986">
    <property type="entry name" value="DExx_box_DNA_helicase_dom_sf"/>
</dbReference>
<dbReference type="InterPro" id="IPR014017">
    <property type="entry name" value="DNA_helicase_UvrD-like_C"/>
</dbReference>
<dbReference type="InterPro" id="IPR000212">
    <property type="entry name" value="DNA_helicase_UvrD/REP"/>
</dbReference>
<dbReference type="InterPro" id="IPR027417">
    <property type="entry name" value="P-loop_NTPase"/>
</dbReference>
<dbReference type="InterPro" id="IPR014016">
    <property type="entry name" value="UvrD-like_ATP-bd"/>
</dbReference>
<dbReference type="NCBIfam" id="TIGR01073">
    <property type="entry name" value="pcrA"/>
    <property type="match status" value="1"/>
</dbReference>
<dbReference type="PANTHER" id="PTHR11070:SF2">
    <property type="entry name" value="ATP-DEPENDENT DNA HELICASE SRS2"/>
    <property type="match status" value="1"/>
</dbReference>
<dbReference type="PANTHER" id="PTHR11070">
    <property type="entry name" value="UVRD / RECB / PCRA DNA HELICASE FAMILY MEMBER"/>
    <property type="match status" value="1"/>
</dbReference>
<dbReference type="Pfam" id="PF21196">
    <property type="entry name" value="PcrA_UvrD_tudor"/>
    <property type="match status" value="1"/>
</dbReference>
<dbReference type="Pfam" id="PF00580">
    <property type="entry name" value="UvrD-helicase"/>
    <property type="match status" value="1"/>
</dbReference>
<dbReference type="Pfam" id="PF13361">
    <property type="entry name" value="UvrD_C"/>
    <property type="match status" value="1"/>
</dbReference>
<dbReference type="SUPFAM" id="SSF52540">
    <property type="entry name" value="P-loop containing nucleoside triphosphate hydrolases"/>
    <property type="match status" value="1"/>
</dbReference>
<dbReference type="PROSITE" id="PS51198">
    <property type="entry name" value="UVRD_HELICASE_ATP_BIND"/>
    <property type="match status" value="1"/>
</dbReference>
<dbReference type="PROSITE" id="PS51217">
    <property type="entry name" value="UVRD_HELICASE_CTER"/>
    <property type="match status" value="1"/>
</dbReference>
<reference key="1">
    <citation type="journal article" date="1993" name="Mol. Gen. Genet.">
        <title>Characterization of the Staphylococcus aureus chromosomal gene pcrA, identified by mutations affecting plasmid pT181 replication.</title>
        <authorList>
            <person name="Iordanescu S."/>
        </authorList>
    </citation>
    <scope>NUCLEOTIDE SEQUENCE [GENOMIC DNA]</scope>
    <scope>MUTANT PCRA3</scope>
</reference>
<reference key="2">
    <citation type="book" date="2006" name="Gram positive pathogens, 2nd edition">
        <title>The Staphylococcus aureus NCTC 8325 genome.</title>
        <editorList>
            <person name="Fischetti V."/>
            <person name="Novick R."/>
            <person name="Ferretti J."/>
            <person name="Portnoy D."/>
            <person name="Rood J."/>
        </editorList>
        <authorList>
            <person name="Gillaspy A.F."/>
            <person name="Worrell V."/>
            <person name="Orvis J."/>
            <person name="Roe B.A."/>
            <person name="Dyer D.W."/>
            <person name="Iandolo J.J."/>
        </authorList>
    </citation>
    <scope>NUCLEOTIDE SEQUENCE [LARGE SCALE GENOMIC DNA]</scope>
    <source>
        <strain>NCTC 8325 / PS 47</strain>
    </source>
</reference>
<organism>
    <name type="scientific">Staphylococcus aureus (strain NCTC 8325 / PS 47)</name>
    <dbReference type="NCBI Taxonomy" id="93061"/>
    <lineage>
        <taxon>Bacteria</taxon>
        <taxon>Bacillati</taxon>
        <taxon>Bacillota</taxon>
        <taxon>Bacilli</taxon>
        <taxon>Bacillales</taxon>
        <taxon>Staphylococcaceae</taxon>
        <taxon>Staphylococcus</taxon>
    </lineage>
</organism>
<comment type="function">
    <text>Essential helicase. May act as a helicase in plasmid pT181 replication.</text>
</comment>
<comment type="catalytic activity">
    <reaction>
        <text>Couples ATP hydrolysis with the unwinding of duplex DNA by translocating in the 3'-5' direction.</text>
        <dbReference type="EC" id="5.6.2.4"/>
    </reaction>
</comment>
<comment type="catalytic activity">
    <reaction>
        <text>ATP + H2O = ADP + phosphate + H(+)</text>
        <dbReference type="Rhea" id="RHEA:13065"/>
        <dbReference type="ChEBI" id="CHEBI:15377"/>
        <dbReference type="ChEBI" id="CHEBI:15378"/>
        <dbReference type="ChEBI" id="CHEBI:30616"/>
        <dbReference type="ChEBI" id="CHEBI:43474"/>
        <dbReference type="ChEBI" id="CHEBI:456216"/>
        <dbReference type="EC" id="5.6.2.4"/>
    </reaction>
</comment>
<comment type="similarity">
    <text evidence="5">Belongs to the helicase family. UvrD subfamily.</text>
</comment>
<comment type="sequence caution" evidence="5">
    <conflict type="frameshift">
        <sequence resource="EMBL-CDS" id="AAA72091"/>
    </conflict>
</comment>
<protein>
    <recommendedName>
        <fullName>ATP-dependent DNA helicase PcrA</fullName>
        <ecNumber>5.6.2.4</ecNumber>
    </recommendedName>
    <alternativeName>
        <fullName evidence="5">DNA 3'-5' helicase PcrA</fullName>
    </alternativeName>
</protein>
<keyword id="KW-0067">ATP-binding</keyword>
<keyword id="KW-0238">DNA-binding</keyword>
<keyword id="KW-0347">Helicase</keyword>
<keyword id="KW-0378">Hydrolase</keyword>
<keyword id="KW-0413">Isomerase</keyword>
<keyword id="KW-0547">Nucleotide-binding</keyword>
<keyword id="KW-1185">Reference proteome</keyword>
<accession>Q53727</accession>
<accession>Q2G1X9</accession>
<name>PCRA_STAA8</name>